<protein>
    <recommendedName>
        <fullName>Protein KATNIP homolog</fullName>
    </recommendedName>
</protein>
<accession>O44770</accession>
<sequence>MSDSDLKEIEKNAENIKLEPAEDEVNEEDQNEITIPELPEGRVLELRLLSNWGDSHYIGLNSVEIFTSTGERAVIDKVTTNVTEYTGSLESLIVQRVHCKDAEKMWCAKTTEEKIVLTLELKETCKLALIRFWNYNASRVHAQIGVRYLEMYLDGVGIFRGELECAFSADSEFTPVMGETVLFTTSDNILELIALHDVCLISLPEEPISNSSIEMLKADHLTPYRPSTCEAKDAPSTPVTIVPPPIFRQTGTAYKHDVKTLHIELLSNWGMDGLIGLTGLELVDEHSQLIDESQYTVTTSDGNSDLSKKLFNGRNLTRDPHDMWLVDFDSKNFTTISITFHDNVALKAISVWNYNASFELSYAGVKAAKIYINGKLIKNVLLRKATGFVYFDYVQDVVLDPNNTERDFVPKGISQSIGGFVFQIRLLSTWGDEFYIGLNGIELYNRKGELMKIREHNLAAFPESVNILPNIKNDLRTSNNLITQPNDTDIARNMWLTALLPNRCARVFFVFDVQTYISKIVIYNYRKTPERGVRHISVTVDDLIIFSGEIPSSTATLTGNLEINLMDI</sequence>
<evidence type="ECO:0000256" key="1">
    <source>
        <dbReference type="SAM" id="MobiDB-lite"/>
    </source>
</evidence>
<evidence type="ECO:0000269" key="2">
    <source>
    </source>
</evidence>
<evidence type="ECO:0000312" key="3">
    <source>
        <dbReference type="WormBase" id="K04F10.2"/>
    </source>
</evidence>
<name>KATIP_CAEEL</name>
<gene>
    <name evidence="3" type="ORF">K04F10.2</name>
</gene>
<proteinExistence type="evidence at transcript level"/>
<keyword id="KW-0966">Cell projection</keyword>
<keyword id="KW-0963">Cytoplasm</keyword>
<keyword id="KW-0206">Cytoskeleton</keyword>
<keyword id="KW-1185">Reference proteome</keyword>
<organism>
    <name type="scientific">Caenorhabditis elegans</name>
    <dbReference type="NCBI Taxonomy" id="6239"/>
    <lineage>
        <taxon>Eukaryota</taxon>
        <taxon>Metazoa</taxon>
        <taxon>Ecdysozoa</taxon>
        <taxon>Nematoda</taxon>
        <taxon>Chromadorea</taxon>
        <taxon>Rhabditida</taxon>
        <taxon>Rhabditina</taxon>
        <taxon>Rhabditomorpha</taxon>
        <taxon>Rhabditoidea</taxon>
        <taxon>Rhabditidae</taxon>
        <taxon>Peloderinae</taxon>
        <taxon>Caenorhabditis</taxon>
    </lineage>
</organism>
<feature type="chain" id="PRO_0000436066" description="Protein KATNIP homolog">
    <location>
        <begin position="1"/>
        <end position="568"/>
    </location>
</feature>
<feature type="region of interest" description="Disordered" evidence="1">
    <location>
        <begin position="1"/>
        <end position="30"/>
    </location>
</feature>
<feature type="compositionally biased region" description="Basic and acidic residues" evidence="1">
    <location>
        <begin position="1"/>
        <end position="20"/>
    </location>
</feature>
<feature type="compositionally biased region" description="Acidic residues" evidence="1">
    <location>
        <begin position="21"/>
        <end position="30"/>
    </location>
</feature>
<reference key="1">
    <citation type="journal article" date="1998" name="Science">
        <title>Genome sequence of the nematode C. elegans: a platform for investigating biology.</title>
        <authorList>
            <consortium name="The C. elegans sequencing consortium"/>
        </authorList>
    </citation>
    <scope>NUCLEOTIDE SEQUENCE [LARGE SCALE GENOMIC DNA]</scope>
    <source>
        <strain>Bristol N2</strain>
    </source>
</reference>
<reference key="2">
    <citation type="journal article" date="2015" name="Genome Biol.">
        <title>KIAA0556 is a novel ciliary basal body component mutated in Joubert syndrome.</title>
        <authorList>
            <person name="Sanders A.A."/>
            <person name="de Vrieze E."/>
            <person name="Alazami A.M."/>
            <person name="Alzahrani F."/>
            <person name="Malarkey E.B."/>
            <person name="Sorusch N."/>
            <person name="Tebbe L."/>
            <person name="Kuhns S."/>
            <person name="van Dam T.J."/>
            <person name="Alhashem A."/>
            <person name="Tabarki B."/>
            <person name="Lu Q."/>
            <person name="Lambacher N.J."/>
            <person name="Kennedy J.E."/>
            <person name="Bowie R.V."/>
            <person name="Hetterschijt L."/>
            <person name="van Beersum S."/>
            <person name="van Reeuwijk J."/>
            <person name="Boldt K."/>
            <person name="Kremer H."/>
            <person name="Kesterson R.A."/>
            <person name="Monies D."/>
            <person name="Abouelhoda M."/>
            <person name="Roepman R."/>
            <person name="Huynen M.H."/>
            <person name="Ueffing M."/>
            <person name="Russell R.B."/>
            <person name="Wolfrum U."/>
            <person name="Yoder B.K."/>
            <person name="van Wijk E."/>
            <person name="Alkuraya F.S."/>
            <person name="Blacque O.E."/>
        </authorList>
    </citation>
    <scope>FUNCTION</scope>
    <scope>SUBCELLULAR LOCATION</scope>
    <scope>TISSUE SPECIFICITY</scope>
    <scope>DISRUPTION PHENOTYPE</scope>
</reference>
<comment type="function">
    <text evidence="2">May regulate ciliary A-tubule number and, along with arl-13, controls cilium integrity.</text>
</comment>
<comment type="subcellular location">
    <subcellularLocation>
        <location evidence="2">Cytoplasm</location>
        <location evidence="2">Cytoskeleton</location>
        <location evidence="2">Cilium axoneme</location>
    </subcellularLocation>
    <subcellularLocation>
        <location evidence="2">Cytoplasm</location>
        <location evidence="2">Cytoskeleton</location>
        <location evidence="2">Cilium basal body</location>
    </subcellularLocation>
    <text evidence="2">Accumulates at the ciliary base, proximal to the transition zone, and within the proximal ciliary axoneme (middle segment and transition zone) (PubMed:26714646). Does not undergo processive movement within the ciliary axonemes or the neuronal processes (PubMed:26714646).</text>
</comment>
<comment type="tissue specificity">
    <text evidence="2">Expressed in most ciliated neuronal cells (PubMed:26714646). Not expressed in non-ciliated cells (PubMed:26714646).</text>
</comment>
<comment type="disruption phenotype">
    <text evidence="2">No obvious phenotype. Ultrastructural analyses reveal disruption of ciliary microtubule load and organization, although various aspects of gross cilium length, function and transport are mostly normal.</text>
</comment>
<dbReference type="EMBL" id="BX284601">
    <property type="protein sequence ID" value="CCD70034.2"/>
    <property type="molecule type" value="Genomic_DNA"/>
</dbReference>
<dbReference type="PIR" id="B87804">
    <property type="entry name" value="B87804"/>
</dbReference>
<dbReference type="RefSeq" id="NP_001362011.1">
    <property type="nucleotide sequence ID" value="NM_001374903.2"/>
</dbReference>
<dbReference type="RefSeq" id="NP_491836.2">
    <property type="nucleotide sequence ID" value="NM_059435.2"/>
</dbReference>
<dbReference type="FunCoup" id="O44770">
    <property type="interactions" value="5"/>
</dbReference>
<dbReference type="IntAct" id="O44770">
    <property type="interactions" value="3"/>
</dbReference>
<dbReference type="STRING" id="6239.K04F10.2.1"/>
<dbReference type="PaxDb" id="6239-K04F10.2"/>
<dbReference type="EnsemblMetazoa" id="K04F10.2.1">
    <property type="protein sequence ID" value="K04F10.2.1"/>
    <property type="gene ID" value="WBGene00019395"/>
</dbReference>
<dbReference type="GeneID" id="187003"/>
<dbReference type="UCSC" id="K04F10.2">
    <property type="organism name" value="c. elegans"/>
</dbReference>
<dbReference type="AGR" id="WB:WBGene00019395"/>
<dbReference type="WormBase" id="K04F10.2">
    <property type="protein sequence ID" value="CE53694"/>
    <property type="gene ID" value="WBGene00019395"/>
</dbReference>
<dbReference type="eggNOG" id="ENOG502QRY1">
    <property type="taxonomic scope" value="Eukaryota"/>
</dbReference>
<dbReference type="GeneTree" id="ENSGT00390000004566"/>
<dbReference type="HOGENOM" id="CLU_003418_2_1_1"/>
<dbReference type="InParanoid" id="O44770"/>
<dbReference type="OrthoDB" id="304622at2759"/>
<dbReference type="PhylomeDB" id="O44770"/>
<dbReference type="PRO" id="PR:O44770"/>
<dbReference type="Proteomes" id="UP000001940">
    <property type="component" value="Chromosome I"/>
</dbReference>
<dbReference type="Bgee" id="WBGene00019395">
    <property type="expression patterns" value="Expressed in pharyngeal muscle cell (C elegans) and 3 other cell types or tissues"/>
</dbReference>
<dbReference type="GO" id="GO:0042995">
    <property type="term" value="C:cell projection"/>
    <property type="evidence" value="ECO:0007669"/>
    <property type="project" value="UniProtKB-KW"/>
</dbReference>
<dbReference type="GO" id="GO:0005737">
    <property type="term" value="C:cytoplasm"/>
    <property type="evidence" value="ECO:0007669"/>
    <property type="project" value="UniProtKB-KW"/>
</dbReference>
<dbReference type="GO" id="GO:0005856">
    <property type="term" value="C:cytoskeleton"/>
    <property type="evidence" value="ECO:0007669"/>
    <property type="project" value="UniProtKB-KW"/>
</dbReference>
<dbReference type="InterPro" id="IPR026704">
    <property type="entry name" value="KATNIP"/>
</dbReference>
<dbReference type="InterPro" id="IPR027859">
    <property type="entry name" value="KATNIP_dom"/>
</dbReference>
<dbReference type="PANTHER" id="PTHR21534">
    <property type="entry name" value="KATANIN-INTERACTING PROTEIN"/>
    <property type="match status" value="1"/>
</dbReference>
<dbReference type="PANTHER" id="PTHR21534:SF0">
    <property type="entry name" value="KATANIN-INTERACTING PROTEIN"/>
    <property type="match status" value="1"/>
</dbReference>
<dbReference type="Pfam" id="PF14652">
    <property type="entry name" value="DUF4457"/>
    <property type="match status" value="3"/>
</dbReference>